<reference key="1">
    <citation type="journal article" date="2007" name="PLoS Genet.">
        <title>Patterns and implications of gene gain and loss in the evolution of Prochlorococcus.</title>
        <authorList>
            <person name="Kettler G.C."/>
            <person name="Martiny A.C."/>
            <person name="Huang K."/>
            <person name="Zucker J."/>
            <person name="Coleman M.L."/>
            <person name="Rodrigue S."/>
            <person name="Chen F."/>
            <person name="Lapidus A."/>
            <person name="Ferriera S."/>
            <person name="Johnson J."/>
            <person name="Steglich C."/>
            <person name="Church G.M."/>
            <person name="Richardson P."/>
            <person name="Chisholm S.W."/>
        </authorList>
    </citation>
    <scope>NUCLEOTIDE SEQUENCE [LARGE SCALE GENOMIC DNA]</scope>
    <source>
        <strain>MIT 9303</strain>
    </source>
</reference>
<organism>
    <name type="scientific">Prochlorococcus marinus (strain MIT 9303)</name>
    <dbReference type="NCBI Taxonomy" id="59922"/>
    <lineage>
        <taxon>Bacteria</taxon>
        <taxon>Bacillati</taxon>
        <taxon>Cyanobacteriota</taxon>
        <taxon>Cyanophyceae</taxon>
        <taxon>Synechococcales</taxon>
        <taxon>Prochlorococcaceae</taxon>
        <taxon>Prochlorococcus</taxon>
    </lineage>
</organism>
<dbReference type="EC" id="2.7.4.6" evidence="1"/>
<dbReference type="EMBL" id="CP000554">
    <property type="protein sequence ID" value="ABM79560.1"/>
    <property type="molecule type" value="Genomic_DNA"/>
</dbReference>
<dbReference type="RefSeq" id="WP_011827402.1">
    <property type="nucleotide sequence ID" value="NC_008820.1"/>
</dbReference>
<dbReference type="SMR" id="A2CDK0"/>
<dbReference type="STRING" id="59922.P9303_28301"/>
<dbReference type="KEGG" id="pmf:P9303_28301"/>
<dbReference type="HOGENOM" id="CLU_060216_6_3_3"/>
<dbReference type="BioCyc" id="PMAR59922:G1G80-2485-MONOMER"/>
<dbReference type="Proteomes" id="UP000002274">
    <property type="component" value="Chromosome"/>
</dbReference>
<dbReference type="GO" id="GO:0005737">
    <property type="term" value="C:cytoplasm"/>
    <property type="evidence" value="ECO:0007669"/>
    <property type="project" value="UniProtKB-SubCell"/>
</dbReference>
<dbReference type="GO" id="GO:0005524">
    <property type="term" value="F:ATP binding"/>
    <property type="evidence" value="ECO:0007669"/>
    <property type="project" value="UniProtKB-UniRule"/>
</dbReference>
<dbReference type="GO" id="GO:0046872">
    <property type="term" value="F:metal ion binding"/>
    <property type="evidence" value="ECO:0007669"/>
    <property type="project" value="UniProtKB-KW"/>
</dbReference>
<dbReference type="GO" id="GO:0004550">
    <property type="term" value="F:nucleoside diphosphate kinase activity"/>
    <property type="evidence" value="ECO:0007669"/>
    <property type="project" value="UniProtKB-UniRule"/>
</dbReference>
<dbReference type="GO" id="GO:0006241">
    <property type="term" value="P:CTP biosynthetic process"/>
    <property type="evidence" value="ECO:0007669"/>
    <property type="project" value="UniProtKB-UniRule"/>
</dbReference>
<dbReference type="GO" id="GO:0006183">
    <property type="term" value="P:GTP biosynthetic process"/>
    <property type="evidence" value="ECO:0007669"/>
    <property type="project" value="UniProtKB-UniRule"/>
</dbReference>
<dbReference type="GO" id="GO:0006228">
    <property type="term" value="P:UTP biosynthetic process"/>
    <property type="evidence" value="ECO:0007669"/>
    <property type="project" value="UniProtKB-UniRule"/>
</dbReference>
<dbReference type="CDD" id="cd04413">
    <property type="entry name" value="NDPk_I"/>
    <property type="match status" value="1"/>
</dbReference>
<dbReference type="FunFam" id="3.30.70.141:FF:000002">
    <property type="entry name" value="Nucleoside diphosphate kinase"/>
    <property type="match status" value="1"/>
</dbReference>
<dbReference type="Gene3D" id="3.30.70.141">
    <property type="entry name" value="Nucleoside diphosphate kinase-like domain"/>
    <property type="match status" value="1"/>
</dbReference>
<dbReference type="HAMAP" id="MF_00451">
    <property type="entry name" value="NDP_kinase"/>
    <property type="match status" value="1"/>
</dbReference>
<dbReference type="InterPro" id="IPR034907">
    <property type="entry name" value="NDK-like_dom"/>
</dbReference>
<dbReference type="InterPro" id="IPR036850">
    <property type="entry name" value="NDK-like_dom_sf"/>
</dbReference>
<dbReference type="InterPro" id="IPR001564">
    <property type="entry name" value="Nucleoside_diP_kinase"/>
</dbReference>
<dbReference type="InterPro" id="IPR023005">
    <property type="entry name" value="Nucleoside_diP_kinase_AS"/>
</dbReference>
<dbReference type="NCBIfam" id="NF001908">
    <property type="entry name" value="PRK00668.1"/>
    <property type="match status" value="1"/>
</dbReference>
<dbReference type="PANTHER" id="PTHR11349">
    <property type="entry name" value="NUCLEOSIDE DIPHOSPHATE KINASE"/>
    <property type="match status" value="1"/>
</dbReference>
<dbReference type="Pfam" id="PF00334">
    <property type="entry name" value="NDK"/>
    <property type="match status" value="1"/>
</dbReference>
<dbReference type="PRINTS" id="PR01243">
    <property type="entry name" value="NUCDPKINASE"/>
</dbReference>
<dbReference type="SMART" id="SM00562">
    <property type="entry name" value="NDK"/>
    <property type="match status" value="1"/>
</dbReference>
<dbReference type="SUPFAM" id="SSF54919">
    <property type="entry name" value="Nucleoside diphosphate kinase, NDK"/>
    <property type="match status" value="1"/>
</dbReference>
<dbReference type="PROSITE" id="PS00469">
    <property type="entry name" value="NDPK"/>
    <property type="match status" value="1"/>
</dbReference>
<dbReference type="PROSITE" id="PS51374">
    <property type="entry name" value="NDPK_LIKE"/>
    <property type="match status" value="1"/>
</dbReference>
<accession>A2CDK0</accession>
<proteinExistence type="inferred from homology"/>
<protein>
    <recommendedName>
        <fullName evidence="1">Nucleoside diphosphate kinase</fullName>
        <shortName evidence="1">NDK</shortName>
        <shortName evidence="1">NDP kinase</shortName>
        <ecNumber evidence="1">2.7.4.6</ecNumber>
    </recommendedName>
    <alternativeName>
        <fullName evidence="1">Nucleoside-2-P kinase</fullName>
    </alternativeName>
</protein>
<feature type="chain" id="PRO_1000026271" description="Nucleoside diphosphate kinase">
    <location>
        <begin position="1"/>
        <end position="152"/>
    </location>
</feature>
<feature type="active site" description="Pros-phosphohistidine intermediate" evidence="1">
    <location>
        <position position="117"/>
    </location>
</feature>
<feature type="binding site" evidence="1">
    <location>
        <position position="11"/>
    </location>
    <ligand>
        <name>ATP</name>
        <dbReference type="ChEBI" id="CHEBI:30616"/>
    </ligand>
</feature>
<feature type="binding site" evidence="1">
    <location>
        <position position="59"/>
    </location>
    <ligand>
        <name>ATP</name>
        <dbReference type="ChEBI" id="CHEBI:30616"/>
    </ligand>
</feature>
<feature type="binding site" evidence="1">
    <location>
        <position position="87"/>
    </location>
    <ligand>
        <name>ATP</name>
        <dbReference type="ChEBI" id="CHEBI:30616"/>
    </ligand>
</feature>
<feature type="binding site" evidence="1">
    <location>
        <position position="93"/>
    </location>
    <ligand>
        <name>ATP</name>
        <dbReference type="ChEBI" id="CHEBI:30616"/>
    </ligand>
</feature>
<feature type="binding site" evidence="1">
    <location>
        <position position="104"/>
    </location>
    <ligand>
        <name>ATP</name>
        <dbReference type="ChEBI" id="CHEBI:30616"/>
    </ligand>
</feature>
<feature type="binding site" evidence="1">
    <location>
        <position position="114"/>
    </location>
    <ligand>
        <name>ATP</name>
        <dbReference type="ChEBI" id="CHEBI:30616"/>
    </ligand>
</feature>
<comment type="function">
    <text evidence="1">Major role in the synthesis of nucleoside triphosphates other than ATP. The ATP gamma phosphate is transferred to the NDP beta phosphate via a ping-pong mechanism, using a phosphorylated active-site intermediate.</text>
</comment>
<comment type="catalytic activity">
    <reaction evidence="1">
        <text>a 2'-deoxyribonucleoside 5'-diphosphate + ATP = a 2'-deoxyribonucleoside 5'-triphosphate + ADP</text>
        <dbReference type="Rhea" id="RHEA:44640"/>
        <dbReference type="ChEBI" id="CHEBI:30616"/>
        <dbReference type="ChEBI" id="CHEBI:61560"/>
        <dbReference type="ChEBI" id="CHEBI:73316"/>
        <dbReference type="ChEBI" id="CHEBI:456216"/>
        <dbReference type="EC" id="2.7.4.6"/>
    </reaction>
</comment>
<comment type="catalytic activity">
    <reaction evidence="1">
        <text>a ribonucleoside 5'-diphosphate + ATP = a ribonucleoside 5'-triphosphate + ADP</text>
        <dbReference type="Rhea" id="RHEA:18113"/>
        <dbReference type="ChEBI" id="CHEBI:30616"/>
        <dbReference type="ChEBI" id="CHEBI:57930"/>
        <dbReference type="ChEBI" id="CHEBI:61557"/>
        <dbReference type="ChEBI" id="CHEBI:456216"/>
        <dbReference type="EC" id="2.7.4.6"/>
    </reaction>
</comment>
<comment type="cofactor">
    <cofactor evidence="1">
        <name>Mg(2+)</name>
        <dbReference type="ChEBI" id="CHEBI:18420"/>
    </cofactor>
</comment>
<comment type="subunit">
    <text evidence="1">Homotetramer.</text>
</comment>
<comment type="subcellular location">
    <subcellularLocation>
        <location evidence="1">Cytoplasm</location>
    </subcellularLocation>
</comment>
<comment type="similarity">
    <text evidence="1">Belongs to the NDK family.</text>
</comment>
<sequence length="152" mass="16610">MAVERTFVAIKPDGVQRGLVGEILGRFERKGFKLVGLKQLAPSRELAGEHYGVHRERPFFAGLVDFITSGPVVAMVWEGDGVIASARKLIGATKPLEAEPGTIRGDLAVNIGRNVIHGSDGPDTAQFEINLWFSPEELNAWTPSDQSWRVES</sequence>
<keyword id="KW-0067">ATP-binding</keyword>
<keyword id="KW-0963">Cytoplasm</keyword>
<keyword id="KW-0418">Kinase</keyword>
<keyword id="KW-0460">Magnesium</keyword>
<keyword id="KW-0479">Metal-binding</keyword>
<keyword id="KW-0546">Nucleotide metabolism</keyword>
<keyword id="KW-0547">Nucleotide-binding</keyword>
<keyword id="KW-0597">Phosphoprotein</keyword>
<keyword id="KW-0808">Transferase</keyword>
<gene>
    <name evidence="1" type="primary">ndk</name>
    <name type="ordered locus">P9303_28301</name>
</gene>
<evidence type="ECO:0000255" key="1">
    <source>
        <dbReference type="HAMAP-Rule" id="MF_00451"/>
    </source>
</evidence>
<name>NDK_PROM3</name>